<accession>A1VNK2</accession>
<keyword id="KW-0067">ATP-binding</keyword>
<keyword id="KW-0963">Cytoplasm</keyword>
<keyword id="KW-0418">Kinase</keyword>
<keyword id="KW-0545">Nucleotide biosynthesis</keyword>
<keyword id="KW-0547">Nucleotide-binding</keyword>
<keyword id="KW-1185">Reference proteome</keyword>
<keyword id="KW-0808">Transferase</keyword>
<gene>
    <name evidence="1" type="primary">adk</name>
    <name type="ordered locus">Pnap_1920</name>
</gene>
<evidence type="ECO:0000255" key="1">
    <source>
        <dbReference type="HAMAP-Rule" id="MF_00235"/>
    </source>
</evidence>
<name>KAD_POLNA</name>
<reference key="1">
    <citation type="journal article" date="2009" name="Environ. Microbiol.">
        <title>The genome of Polaromonas naphthalenivorans strain CJ2, isolated from coal tar-contaminated sediment, reveals physiological and metabolic versatility and evolution through extensive horizontal gene transfer.</title>
        <authorList>
            <person name="Yagi J.M."/>
            <person name="Sims D."/>
            <person name="Brettin T."/>
            <person name="Bruce D."/>
            <person name="Madsen E.L."/>
        </authorList>
    </citation>
    <scope>NUCLEOTIDE SEQUENCE [LARGE SCALE GENOMIC DNA]</scope>
    <source>
        <strain>CJ2</strain>
    </source>
</reference>
<sequence length="218" mass="23706">MKLILLGAPGAGKGTQATFICQKYGIPQISTGDMLRAAVKAGTPLGIEAKKVMDSGGLVSDDLIINLVKERIAQPDCAQGFLFDGFPRTIPQADAMKAAGVKIDYVLEIDVPFEAIIERMSGRRSHSASGRTYHVKYNPPKVEGLDDVTGEPLIQREDDKEETVAKRLEVYSAQTRPLVAYYSDWATEAPDEAPKYRAISGTGTVEEITERAFKALSN</sequence>
<protein>
    <recommendedName>
        <fullName evidence="1">Adenylate kinase</fullName>
        <shortName evidence="1">AK</shortName>
        <ecNumber evidence="1">2.7.4.3</ecNumber>
    </recommendedName>
    <alternativeName>
        <fullName evidence="1">ATP-AMP transphosphorylase</fullName>
    </alternativeName>
    <alternativeName>
        <fullName evidence="1">ATP:AMP phosphotransferase</fullName>
    </alternativeName>
    <alternativeName>
        <fullName evidence="1">Adenylate monophosphate kinase</fullName>
    </alternativeName>
</protein>
<dbReference type="EC" id="2.7.4.3" evidence="1"/>
<dbReference type="EMBL" id="CP000529">
    <property type="protein sequence ID" value="ABM37230.1"/>
    <property type="molecule type" value="Genomic_DNA"/>
</dbReference>
<dbReference type="RefSeq" id="WP_011801311.1">
    <property type="nucleotide sequence ID" value="NC_008781.1"/>
</dbReference>
<dbReference type="SMR" id="A1VNK2"/>
<dbReference type="STRING" id="365044.Pnap_1920"/>
<dbReference type="KEGG" id="pna:Pnap_1920"/>
<dbReference type="eggNOG" id="COG0563">
    <property type="taxonomic scope" value="Bacteria"/>
</dbReference>
<dbReference type="HOGENOM" id="CLU_032354_1_2_4"/>
<dbReference type="OrthoDB" id="9805030at2"/>
<dbReference type="UniPathway" id="UPA00588">
    <property type="reaction ID" value="UER00649"/>
</dbReference>
<dbReference type="Proteomes" id="UP000000644">
    <property type="component" value="Chromosome"/>
</dbReference>
<dbReference type="GO" id="GO:0005737">
    <property type="term" value="C:cytoplasm"/>
    <property type="evidence" value="ECO:0007669"/>
    <property type="project" value="UniProtKB-SubCell"/>
</dbReference>
<dbReference type="GO" id="GO:0004017">
    <property type="term" value="F:adenylate kinase activity"/>
    <property type="evidence" value="ECO:0007669"/>
    <property type="project" value="UniProtKB-UniRule"/>
</dbReference>
<dbReference type="GO" id="GO:0005524">
    <property type="term" value="F:ATP binding"/>
    <property type="evidence" value="ECO:0007669"/>
    <property type="project" value="UniProtKB-UniRule"/>
</dbReference>
<dbReference type="GO" id="GO:0044209">
    <property type="term" value="P:AMP salvage"/>
    <property type="evidence" value="ECO:0007669"/>
    <property type="project" value="UniProtKB-UniRule"/>
</dbReference>
<dbReference type="CDD" id="cd01428">
    <property type="entry name" value="ADK"/>
    <property type="match status" value="1"/>
</dbReference>
<dbReference type="FunFam" id="3.40.50.300:FF:000106">
    <property type="entry name" value="Adenylate kinase mitochondrial"/>
    <property type="match status" value="1"/>
</dbReference>
<dbReference type="Gene3D" id="3.40.50.300">
    <property type="entry name" value="P-loop containing nucleotide triphosphate hydrolases"/>
    <property type="match status" value="1"/>
</dbReference>
<dbReference type="HAMAP" id="MF_00235">
    <property type="entry name" value="Adenylate_kinase_Adk"/>
    <property type="match status" value="1"/>
</dbReference>
<dbReference type="InterPro" id="IPR006259">
    <property type="entry name" value="Adenyl_kin_sub"/>
</dbReference>
<dbReference type="InterPro" id="IPR000850">
    <property type="entry name" value="Adenylat/UMP-CMP_kin"/>
</dbReference>
<dbReference type="InterPro" id="IPR033690">
    <property type="entry name" value="Adenylat_kinase_CS"/>
</dbReference>
<dbReference type="InterPro" id="IPR007862">
    <property type="entry name" value="Adenylate_kinase_lid-dom"/>
</dbReference>
<dbReference type="InterPro" id="IPR027417">
    <property type="entry name" value="P-loop_NTPase"/>
</dbReference>
<dbReference type="NCBIfam" id="TIGR01351">
    <property type="entry name" value="adk"/>
    <property type="match status" value="1"/>
</dbReference>
<dbReference type="NCBIfam" id="NF001379">
    <property type="entry name" value="PRK00279.1-1"/>
    <property type="match status" value="1"/>
</dbReference>
<dbReference type="NCBIfam" id="NF001380">
    <property type="entry name" value="PRK00279.1-2"/>
    <property type="match status" value="1"/>
</dbReference>
<dbReference type="NCBIfam" id="NF001381">
    <property type="entry name" value="PRK00279.1-3"/>
    <property type="match status" value="1"/>
</dbReference>
<dbReference type="NCBIfam" id="NF011100">
    <property type="entry name" value="PRK14527.1"/>
    <property type="match status" value="1"/>
</dbReference>
<dbReference type="PANTHER" id="PTHR23359">
    <property type="entry name" value="NUCLEOTIDE KINASE"/>
    <property type="match status" value="1"/>
</dbReference>
<dbReference type="Pfam" id="PF00406">
    <property type="entry name" value="ADK"/>
    <property type="match status" value="1"/>
</dbReference>
<dbReference type="Pfam" id="PF05191">
    <property type="entry name" value="ADK_lid"/>
    <property type="match status" value="1"/>
</dbReference>
<dbReference type="PRINTS" id="PR00094">
    <property type="entry name" value="ADENYLTKNASE"/>
</dbReference>
<dbReference type="SUPFAM" id="SSF52540">
    <property type="entry name" value="P-loop containing nucleoside triphosphate hydrolases"/>
    <property type="match status" value="1"/>
</dbReference>
<dbReference type="PROSITE" id="PS00113">
    <property type="entry name" value="ADENYLATE_KINASE"/>
    <property type="match status" value="1"/>
</dbReference>
<proteinExistence type="inferred from homology"/>
<comment type="function">
    <text evidence="1">Catalyzes the reversible transfer of the terminal phosphate group between ATP and AMP. Plays an important role in cellular energy homeostasis and in adenine nucleotide metabolism.</text>
</comment>
<comment type="catalytic activity">
    <reaction evidence="1">
        <text>AMP + ATP = 2 ADP</text>
        <dbReference type="Rhea" id="RHEA:12973"/>
        <dbReference type="ChEBI" id="CHEBI:30616"/>
        <dbReference type="ChEBI" id="CHEBI:456215"/>
        <dbReference type="ChEBI" id="CHEBI:456216"/>
        <dbReference type="EC" id="2.7.4.3"/>
    </reaction>
</comment>
<comment type="pathway">
    <text evidence="1">Purine metabolism; AMP biosynthesis via salvage pathway; AMP from ADP: step 1/1.</text>
</comment>
<comment type="subunit">
    <text evidence="1">Monomer.</text>
</comment>
<comment type="subcellular location">
    <subcellularLocation>
        <location evidence="1">Cytoplasm</location>
    </subcellularLocation>
</comment>
<comment type="domain">
    <text evidence="1">Consists of three domains, a large central CORE domain and two small peripheral domains, NMPbind and LID, which undergo movements during catalysis. The LID domain closes over the site of phosphoryl transfer upon ATP binding. Assembling and dissambling the active center during each catalytic cycle provides an effective means to prevent ATP hydrolysis.</text>
</comment>
<comment type="similarity">
    <text evidence="1">Belongs to the adenylate kinase family.</text>
</comment>
<organism>
    <name type="scientific">Polaromonas naphthalenivorans (strain CJ2)</name>
    <dbReference type="NCBI Taxonomy" id="365044"/>
    <lineage>
        <taxon>Bacteria</taxon>
        <taxon>Pseudomonadati</taxon>
        <taxon>Pseudomonadota</taxon>
        <taxon>Betaproteobacteria</taxon>
        <taxon>Burkholderiales</taxon>
        <taxon>Comamonadaceae</taxon>
        <taxon>Polaromonas</taxon>
    </lineage>
</organism>
<feature type="chain" id="PRO_1000058870" description="Adenylate kinase">
    <location>
        <begin position="1"/>
        <end position="218"/>
    </location>
</feature>
<feature type="region of interest" description="NMP" evidence="1">
    <location>
        <begin position="30"/>
        <end position="59"/>
    </location>
</feature>
<feature type="region of interest" description="LID" evidence="1">
    <location>
        <begin position="122"/>
        <end position="159"/>
    </location>
</feature>
<feature type="binding site" evidence="1">
    <location>
        <begin position="10"/>
        <end position="15"/>
    </location>
    <ligand>
        <name>ATP</name>
        <dbReference type="ChEBI" id="CHEBI:30616"/>
    </ligand>
</feature>
<feature type="binding site" evidence="1">
    <location>
        <position position="31"/>
    </location>
    <ligand>
        <name>AMP</name>
        <dbReference type="ChEBI" id="CHEBI:456215"/>
    </ligand>
</feature>
<feature type="binding site" evidence="1">
    <location>
        <position position="36"/>
    </location>
    <ligand>
        <name>AMP</name>
        <dbReference type="ChEBI" id="CHEBI:456215"/>
    </ligand>
</feature>
<feature type="binding site" evidence="1">
    <location>
        <begin position="57"/>
        <end position="59"/>
    </location>
    <ligand>
        <name>AMP</name>
        <dbReference type="ChEBI" id="CHEBI:456215"/>
    </ligand>
</feature>
<feature type="binding site" evidence="1">
    <location>
        <begin position="85"/>
        <end position="88"/>
    </location>
    <ligand>
        <name>AMP</name>
        <dbReference type="ChEBI" id="CHEBI:456215"/>
    </ligand>
</feature>
<feature type="binding site" evidence="1">
    <location>
        <position position="92"/>
    </location>
    <ligand>
        <name>AMP</name>
        <dbReference type="ChEBI" id="CHEBI:456215"/>
    </ligand>
</feature>
<feature type="binding site" evidence="1">
    <location>
        <position position="123"/>
    </location>
    <ligand>
        <name>ATP</name>
        <dbReference type="ChEBI" id="CHEBI:30616"/>
    </ligand>
</feature>
<feature type="binding site" evidence="1">
    <location>
        <begin position="132"/>
        <end position="133"/>
    </location>
    <ligand>
        <name>ATP</name>
        <dbReference type="ChEBI" id="CHEBI:30616"/>
    </ligand>
</feature>
<feature type="binding site" evidence="1">
    <location>
        <position position="156"/>
    </location>
    <ligand>
        <name>AMP</name>
        <dbReference type="ChEBI" id="CHEBI:456215"/>
    </ligand>
</feature>
<feature type="binding site" evidence="1">
    <location>
        <position position="167"/>
    </location>
    <ligand>
        <name>AMP</name>
        <dbReference type="ChEBI" id="CHEBI:456215"/>
    </ligand>
</feature>
<feature type="binding site" evidence="1">
    <location>
        <position position="203"/>
    </location>
    <ligand>
        <name>ATP</name>
        <dbReference type="ChEBI" id="CHEBI:30616"/>
    </ligand>
</feature>